<protein>
    <recommendedName>
        <fullName>Putative gustatory receptor 36a</fullName>
    </recommendedName>
</protein>
<sequence>MFDWVGLLLKVLYYYGQIIGLINFEIDWQRGRVVAAQRGILFAIAINVLICMVLLLQISKKFNLDVYFGRANQLHQYVIIVMVSLRMASGISAILNRWRQRAQLMRLVECVLRLFLKKPHVKQMSRWAILVKFSVGVVSNFLQMAISMESLDRLGFNEFVGMASDFWMSAIINMAISQHYLVILFVRAYYHLLKTEVRQAIHESQMLSEIYPRRAAFMTKCCYLADRIDNIAKLQNQLQSIVTQLNQVFGIQGIMVYGGYYIFSVATTYITYSLAINGIEELHLSVRAAALVFSWFLFYYTSAILNLFVMLKLFDDHKEMERILEERTLFTSALDVRLEQSFESIQLQLIRNPLKIEVLDIFTITRSSSAAMIGSIITNSIFLIQYDMEYF</sequence>
<accession>P58955</accession>
<accession>Q8INZ3</accession>
<dbReference type="EMBL" id="AE014134">
    <property type="protein sequence ID" value="AAN10981.2"/>
    <property type="molecule type" value="Genomic_DNA"/>
</dbReference>
<dbReference type="RefSeq" id="NP_724038.2">
    <property type="nucleotide sequence ID" value="NM_165205.2"/>
</dbReference>
<dbReference type="SMR" id="P58955"/>
<dbReference type="FunCoup" id="P58955">
    <property type="interactions" value="6"/>
</dbReference>
<dbReference type="STRING" id="7227.FBpp0080515"/>
<dbReference type="PaxDb" id="7227-FBpp0080515"/>
<dbReference type="EnsemblMetazoa" id="FBtr0080962">
    <property type="protein sequence ID" value="FBpp0080515"/>
    <property type="gene ID" value="FBgn0045487"/>
</dbReference>
<dbReference type="GeneID" id="117488"/>
<dbReference type="KEGG" id="dme:Dmel_CG31747"/>
<dbReference type="AGR" id="FB:FBgn0045487"/>
<dbReference type="CTD" id="117488"/>
<dbReference type="FlyBase" id="FBgn0045487">
    <property type="gene designation" value="Gr36a"/>
</dbReference>
<dbReference type="VEuPathDB" id="VectorBase:FBgn0045487"/>
<dbReference type="GeneTree" id="ENSGT00540000073531"/>
<dbReference type="HOGENOM" id="CLU_058694_0_0_1"/>
<dbReference type="InParanoid" id="P58955"/>
<dbReference type="OMA" id="IHESQML"/>
<dbReference type="OrthoDB" id="7856336at2759"/>
<dbReference type="PhylomeDB" id="P58955"/>
<dbReference type="BioGRID-ORCS" id="117488">
    <property type="hits" value="0 hits in 1 CRISPR screen"/>
</dbReference>
<dbReference type="GenomeRNAi" id="117488"/>
<dbReference type="PRO" id="PR:P58955"/>
<dbReference type="Proteomes" id="UP000000803">
    <property type="component" value="Chromosome 2L"/>
</dbReference>
<dbReference type="GO" id="GO:0030424">
    <property type="term" value="C:axon"/>
    <property type="evidence" value="ECO:0000318"/>
    <property type="project" value="GO_Central"/>
</dbReference>
<dbReference type="GO" id="GO:0030425">
    <property type="term" value="C:dendrite"/>
    <property type="evidence" value="ECO:0000318"/>
    <property type="project" value="GO_Central"/>
</dbReference>
<dbReference type="GO" id="GO:0016020">
    <property type="term" value="C:membrane"/>
    <property type="evidence" value="ECO:0000303"/>
    <property type="project" value="UniProtKB"/>
</dbReference>
<dbReference type="GO" id="GO:0043025">
    <property type="term" value="C:neuronal cell body"/>
    <property type="evidence" value="ECO:0000318"/>
    <property type="project" value="GO_Central"/>
</dbReference>
<dbReference type="GO" id="GO:0005886">
    <property type="term" value="C:plasma membrane"/>
    <property type="evidence" value="ECO:0000250"/>
    <property type="project" value="FlyBase"/>
</dbReference>
<dbReference type="GO" id="GO:0015276">
    <property type="term" value="F:ligand-gated monoatomic ion channel activity"/>
    <property type="evidence" value="ECO:0000250"/>
    <property type="project" value="FlyBase"/>
</dbReference>
<dbReference type="GO" id="GO:0008527">
    <property type="term" value="F:taste receptor activity"/>
    <property type="evidence" value="ECO:0000250"/>
    <property type="project" value="FlyBase"/>
</dbReference>
<dbReference type="GO" id="GO:0034220">
    <property type="term" value="P:monoatomic ion transmembrane transport"/>
    <property type="evidence" value="ECO:0000250"/>
    <property type="project" value="FlyBase"/>
</dbReference>
<dbReference type="GO" id="GO:0050909">
    <property type="term" value="P:sensory perception of taste"/>
    <property type="evidence" value="ECO:0000250"/>
    <property type="project" value="FlyBase"/>
</dbReference>
<dbReference type="GO" id="GO:0007165">
    <property type="term" value="P:signal transduction"/>
    <property type="evidence" value="ECO:0007669"/>
    <property type="project" value="UniProtKB-KW"/>
</dbReference>
<dbReference type="InterPro" id="IPR013604">
    <property type="entry name" value="7TM_chemorcpt"/>
</dbReference>
<dbReference type="Pfam" id="PF08395">
    <property type="entry name" value="7tm_7"/>
    <property type="match status" value="1"/>
</dbReference>
<feature type="chain" id="PRO_0000216505" description="Putative gustatory receptor 36a">
    <location>
        <begin position="1"/>
        <end position="391"/>
    </location>
</feature>
<feature type="topological domain" description="Cytoplasmic" evidence="1">
    <location>
        <begin position="1"/>
        <end position="3"/>
    </location>
</feature>
<feature type="transmembrane region" description="Helical; Name=1" evidence="2">
    <location>
        <begin position="4"/>
        <end position="24"/>
    </location>
</feature>
<feature type="topological domain" description="Extracellular" evidence="1">
    <location>
        <begin position="25"/>
        <end position="38"/>
    </location>
</feature>
<feature type="transmembrane region" description="Helical; Name=2" evidence="2">
    <location>
        <begin position="39"/>
        <end position="59"/>
    </location>
</feature>
<feature type="topological domain" description="Cytoplasmic" evidence="1">
    <location>
        <begin position="60"/>
        <end position="73"/>
    </location>
</feature>
<feature type="transmembrane region" description="Helical; Name=3" evidence="2">
    <location>
        <begin position="74"/>
        <end position="94"/>
    </location>
</feature>
<feature type="topological domain" description="Extracellular" evidence="1">
    <location>
        <begin position="95"/>
        <end position="126"/>
    </location>
</feature>
<feature type="transmembrane region" description="Helical; Name=4" evidence="2">
    <location>
        <begin position="127"/>
        <end position="147"/>
    </location>
</feature>
<feature type="topological domain" description="Cytoplasmic" evidence="1">
    <location>
        <begin position="148"/>
        <end position="165"/>
    </location>
</feature>
<feature type="transmembrane region" description="Helical; Name=5" evidence="2">
    <location>
        <begin position="166"/>
        <end position="186"/>
    </location>
</feature>
<feature type="topological domain" description="Extracellular" evidence="1">
    <location>
        <begin position="187"/>
        <end position="247"/>
    </location>
</feature>
<feature type="transmembrane region" description="Helical; Name=6" evidence="2">
    <location>
        <begin position="248"/>
        <end position="268"/>
    </location>
</feature>
<feature type="topological domain" description="Cytoplasmic" evidence="1">
    <location>
        <begin position="269"/>
        <end position="290"/>
    </location>
</feature>
<feature type="transmembrane region" description="Helical; Name=7" evidence="2">
    <location>
        <begin position="291"/>
        <end position="311"/>
    </location>
</feature>
<feature type="topological domain" description="Extracellular" evidence="1">
    <location>
        <begin position="312"/>
        <end position="391"/>
    </location>
</feature>
<comment type="function">
    <text evidence="1">Probable gustatory receptor which mediates acceptance or avoidance behavior, depending on its substrates.</text>
</comment>
<comment type="subcellular location">
    <subcellularLocation>
        <location evidence="1">Cell membrane</location>
        <topology evidence="1">Multi-pass membrane protein</topology>
    </subcellularLocation>
</comment>
<comment type="similarity">
    <text evidence="3">Belongs to the insect chemoreceptor superfamily. Gustatory receptor (GR) family. Gr22e subfamily.</text>
</comment>
<gene>
    <name type="primary">Gr36a</name>
    <name type="ORF">CG31747</name>
</gene>
<organism>
    <name type="scientific">Drosophila melanogaster</name>
    <name type="common">Fruit fly</name>
    <dbReference type="NCBI Taxonomy" id="7227"/>
    <lineage>
        <taxon>Eukaryota</taxon>
        <taxon>Metazoa</taxon>
        <taxon>Ecdysozoa</taxon>
        <taxon>Arthropoda</taxon>
        <taxon>Hexapoda</taxon>
        <taxon>Insecta</taxon>
        <taxon>Pterygota</taxon>
        <taxon>Neoptera</taxon>
        <taxon>Endopterygota</taxon>
        <taxon>Diptera</taxon>
        <taxon>Brachycera</taxon>
        <taxon>Muscomorpha</taxon>
        <taxon>Ephydroidea</taxon>
        <taxon>Drosophilidae</taxon>
        <taxon>Drosophila</taxon>
        <taxon>Sophophora</taxon>
    </lineage>
</organism>
<proteinExistence type="inferred from homology"/>
<name>GR36A_DROME</name>
<evidence type="ECO:0000250" key="1"/>
<evidence type="ECO:0000255" key="2"/>
<evidence type="ECO:0000305" key="3"/>
<reference key="1">
    <citation type="journal article" date="2000" name="Science">
        <title>The genome sequence of Drosophila melanogaster.</title>
        <authorList>
            <person name="Adams M.D."/>
            <person name="Celniker S.E."/>
            <person name="Holt R.A."/>
            <person name="Evans C.A."/>
            <person name="Gocayne J.D."/>
            <person name="Amanatides P.G."/>
            <person name="Scherer S.E."/>
            <person name="Li P.W."/>
            <person name="Hoskins R.A."/>
            <person name="Galle R.F."/>
            <person name="George R.A."/>
            <person name="Lewis S.E."/>
            <person name="Richards S."/>
            <person name="Ashburner M."/>
            <person name="Henderson S.N."/>
            <person name="Sutton G.G."/>
            <person name="Wortman J.R."/>
            <person name="Yandell M.D."/>
            <person name="Zhang Q."/>
            <person name="Chen L.X."/>
            <person name="Brandon R.C."/>
            <person name="Rogers Y.-H.C."/>
            <person name="Blazej R.G."/>
            <person name="Champe M."/>
            <person name="Pfeiffer B.D."/>
            <person name="Wan K.H."/>
            <person name="Doyle C."/>
            <person name="Baxter E.G."/>
            <person name="Helt G."/>
            <person name="Nelson C.R."/>
            <person name="Miklos G.L.G."/>
            <person name="Abril J.F."/>
            <person name="Agbayani A."/>
            <person name="An H.-J."/>
            <person name="Andrews-Pfannkoch C."/>
            <person name="Baldwin D."/>
            <person name="Ballew R.M."/>
            <person name="Basu A."/>
            <person name="Baxendale J."/>
            <person name="Bayraktaroglu L."/>
            <person name="Beasley E.M."/>
            <person name="Beeson K.Y."/>
            <person name="Benos P.V."/>
            <person name="Berman B.P."/>
            <person name="Bhandari D."/>
            <person name="Bolshakov S."/>
            <person name="Borkova D."/>
            <person name="Botchan M.R."/>
            <person name="Bouck J."/>
            <person name="Brokstein P."/>
            <person name="Brottier P."/>
            <person name="Burtis K.C."/>
            <person name="Busam D.A."/>
            <person name="Butler H."/>
            <person name="Cadieu E."/>
            <person name="Center A."/>
            <person name="Chandra I."/>
            <person name="Cherry J.M."/>
            <person name="Cawley S."/>
            <person name="Dahlke C."/>
            <person name="Davenport L.B."/>
            <person name="Davies P."/>
            <person name="de Pablos B."/>
            <person name="Delcher A."/>
            <person name="Deng Z."/>
            <person name="Mays A.D."/>
            <person name="Dew I."/>
            <person name="Dietz S.M."/>
            <person name="Dodson K."/>
            <person name="Doup L.E."/>
            <person name="Downes M."/>
            <person name="Dugan-Rocha S."/>
            <person name="Dunkov B.C."/>
            <person name="Dunn P."/>
            <person name="Durbin K.J."/>
            <person name="Evangelista C.C."/>
            <person name="Ferraz C."/>
            <person name="Ferriera S."/>
            <person name="Fleischmann W."/>
            <person name="Fosler C."/>
            <person name="Gabrielian A.E."/>
            <person name="Garg N.S."/>
            <person name="Gelbart W.M."/>
            <person name="Glasser K."/>
            <person name="Glodek A."/>
            <person name="Gong F."/>
            <person name="Gorrell J.H."/>
            <person name="Gu Z."/>
            <person name="Guan P."/>
            <person name="Harris M."/>
            <person name="Harris N.L."/>
            <person name="Harvey D.A."/>
            <person name="Heiman T.J."/>
            <person name="Hernandez J.R."/>
            <person name="Houck J."/>
            <person name="Hostin D."/>
            <person name="Houston K.A."/>
            <person name="Howland T.J."/>
            <person name="Wei M.-H."/>
            <person name="Ibegwam C."/>
            <person name="Jalali M."/>
            <person name="Kalush F."/>
            <person name="Karpen G.H."/>
            <person name="Ke Z."/>
            <person name="Kennison J.A."/>
            <person name="Ketchum K.A."/>
            <person name="Kimmel B.E."/>
            <person name="Kodira C.D."/>
            <person name="Kraft C.L."/>
            <person name="Kravitz S."/>
            <person name="Kulp D."/>
            <person name="Lai Z."/>
            <person name="Lasko P."/>
            <person name="Lei Y."/>
            <person name="Levitsky A.A."/>
            <person name="Li J.H."/>
            <person name="Li Z."/>
            <person name="Liang Y."/>
            <person name="Lin X."/>
            <person name="Liu X."/>
            <person name="Mattei B."/>
            <person name="McIntosh T.C."/>
            <person name="McLeod M.P."/>
            <person name="McPherson D."/>
            <person name="Merkulov G."/>
            <person name="Milshina N.V."/>
            <person name="Mobarry C."/>
            <person name="Morris J."/>
            <person name="Moshrefi A."/>
            <person name="Mount S.M."/>
            <person name="Moy M."/>
            <person name="Murphy B."/>
            <person name="Murphy L."/>
            <person name="Muzny D.M."/>
            <person name="Nelson D.L."/>
            <person name="Nelson D.R."/>
            <person name="Nelson K.A."/>
            <person name="Nixon K."/>
            <person name="Nusskern D.R."/>
            <person name="Pacleb J.M."/>
            <person name="Palazzolo M."/>
            <person name="Pittman G.S."/>
            <person name="Pan S."/>
            <person name="Pollard J."/>
            <person name="Puri V."/>
            <person name="Reese M.G."/>
            <person name="Reinert K."/>
            <person name="Remington K."/>
            <person name="Saunders R.D.C."/>
            <person name="Scheeler F."/>
            <person name="Shen H."/>
            <person name="Shue B.C."/>
            <person name="Siden-Kiamos I."/>
            <person name="Simpson M."/>
            <person name="Skupski M.P."/>
            <person name="Smith T.J."/>
            <person name="Spier E."/>
            <person name="Spradling A.C."/>
            <person name="Stapleton M."/>
            <person name="Strong R."/>
            <person name="Sun E."/>
            <person name="Svirskas R."/>
            <person name="Tector C."/>
            <person name="Turner R."/>
            <person name="Venter E."/>
            <person name="Wang A.H."/>
            <person name="Wang X."/>
            <person name="Wang Z.-Y."/>
            <person name="Wassarman D.A."/>
            <person name="Weinstock G.M."/>
            <person name="Weissenbach J."/>
            <person name="Williams S.M."/>
            <person name="Woodage T."/>
            <person name="Worley K.C."/>
            <person name="Wu D."/>
            <person name="Yang S."/>
            <person name="Yao Q.A."/>
            <person name="Ye J."/>
            <person name="Yeh R.-F."/>
            <person name="Zaveri J.S."/>
            <person name="Zhan M."/>
            <person name="Zhang G."/>
            <person name="Zhao Q."/>
            <person name="Zheng L."/>
            <person name="Zheng X.H."/>
            <person name="Zhong F.N."/>
            <person name="Zhong W."/>
            <person name="Zhou X."/>
            <person name="Zhu S.C."/>
            <person name="Zhu X."/>
            <person name="Smith H.O."/>
            <person name="Gibbs R.A."/>
            <person name="Myers E.W."/>
            <person name="Rubin G.M."/>
            <person name="Venter J.C."/>
        </authorList>
    </citation>
    <scope>NUCLEOTIDE SEQUENCE [LARGE SCALE GENOMIC DNA]</scope>
    <source>
        <strain>Berkeley</strain>
    </source>
</reference>
<reference key="2">
    <citation type="journal article" date="2002" name="Genome Biol.">
        <title>Annotation of the Drosophila melanogaster euchromatic genome: a systematic review.</title>
        <authorList>
            <person name="Misra S."/>
            <person name="Crosby M.A."/>
            <person name="Mungall C.J."/>
            <person name="Matthews B.B."/>
            <person name="Campbell K.S."/>
            <person name="Hradecky P."/>
            <person name="Huang Y."/>
            <person name="Kaminker J.S."/>
            <person name="Millburn G.H."/>
            <person name="Prochnik S.E."/>
            <person name="Smith C.D."/>
            <person name="Tupy J.L."/>
            <person name="Whitfield E.J."/>
            <person name="Bayraktaroglu L."/>
            <person name="Berman B.P."/>
            <person name="Bettencourt B.R."/>
            <person name="Celniker S.E."/>
            <person name="de Grey A.D.N.J."/>
            <person name="Drysdale R.A."/>
            <person name="Harris N.L."/>
            <person name="Richter J."/>
            <person name="Russo S."/>
            <person name="Schroeder A.J."/>
            <person name="Shu S.Q."/>
            <person name="Stapleton M."/>
            <person name="Yamada C."/>
            <person name="Ashburner M."/>
            <person name="Gelbart W.M."/>
            <person name="Rubin G.M."/>
            <person name="Lewis S.E."/>
        </authorList>
    </citation>
    <scope>GENOME REANNOTATION</scope>
    <source>
        <strain>Berkeley</strain>
    </source>
</reference>
<reference key="3">
    <citation type="journal article" date="2001" name="Curr. Biol.">
        <title>Spatially restricted expression of candidate taste receptors in the Drosophila gustatory system.</title>
        <authorList>
            <person name="Dunipace L."/>
            <person name="Meister S."/>
            <person name="McNealy C."/>
            <person name="Amrein H."/>
        </authorList>
    </citation>
    <scope>IDENTIFICATION</scope>
</reference>
<keyword id="KW-1003">Cell membrane</keyword>
<keyword id="KW-0472">Membrane</keyword>
<keyword id="KW-0675">Receptor</keyword>
<keyword id="KW-1185">Reference proteome</keyword>
<keyword id="KW-0807">Transducer</keyword>
<keyword id="KW-0812">Transmembrane</keyword>
<keyword id="KW-1133">Transmembrane helix</keyword>